<protein>
    <recommendedName>
        <fullName evidence="3">Contryphan-Cal2</fullName>
    </recommendedName>
    <alternativeName>
        <fullName evidence="2">O3_contryphan-like cal2</fullName>
    </alternativeName>
</protein>
<accession>P0DUA7</accession>
<reference key="1">
    <citation type="journal article" date="2019" name="Toxins">
        <title>The diversified O-superfamily in Californiconus californicus presents a conotoxin with antimycobacterial activity.</title>
        <authorList>
            <person name="Bernaldez-Sarabia J."/>
            <person name="Figueroa-Montiel A."/>
            <person name="Duenas S."/>
            <person name="Cervantes-Luevano K."/>
            <person name="Beltran J.A."/>
            <person name="Ortiz E."/>
            <person name="Jimenez S."/>
            <person name="Possani L.D."/>
            <person name="Paniagua-Solis J.F."/>
            <person name="Gonzalez-Canudas J."/>
            <person name="Licea-Navarro A."/>
        </authorList>
    </citation>
    <scope>NUCLEOTIDE SEQUENCE [MRNA]</scope>
    <source>
        <tissue>Venom duct</tissue>
    </source>
</reference>
<feature type="signal peptide" evidence="1">
    <location>
        <begin position="1"/>
        <end position="20"/>
    </location>
</feature>
<feature type="peptide" id="PRO_0000450989" description="Contryphan-Cal2">
    <location>
        <begin position="21"/>
        <end position="39"/>
    </location>
</feature>
<feature type="disulfide bond" evidence="3">
    <location>
        <begin position="29"/>
        <end position="35"/>
    </location>
</feature>
<name>COW2_CONCL</name>
<proteinExistence type="inferred from homology"/>
<comment type="function">
    <text evidence="3">Probable neurotoxin.</text>
</comment>
<comment type="subcellular location">
    <subcellularLocation>
        <location evidence="4">Secreted</location>
    </subcellularLocation>
</comment>
<comment type="tissue specificity">
    <text evidence="4">Expressed by the venom duct.</text>
</comment>
<comment type="domain">
    <text evidence="3">The cysteine framework is C-C.</text>
</comment>
<evidence type="ECO:0000255" key="1"/>
<evidence type="ECO:0000303" key="2">
    <source>
    </source>
</evidence>
<evidence type="ECO:0000305" key="3"/>
<evidence type="ECO:0000305" key="4">
    <source>
    </source>
</evidence>
<sequence length="39" mass="4559">MTRTAVLLLTLLFLVAMAASDKIKTRELCWTEEECENWE</sequence>
<organism>
    <name type="scientific">Californiconus californicus</name>
    <name type="common">California cone</name>
    <name type="synonym">Conus californicus</name>
    <dbReference type="NCBI Taxonomy" id="1736779"/>
    <lineage>
        <taxon>Eukaryota</taxon>
        <taxon>Metazoa</taxon>
        <taxon>Spiralia</taxon>
        <taxon>Lophotrochozoa</taxon>
        <taxon>Mollusca</taxon>
        <taxon>Gastropoda</taxon>
        <taxon>Caenogastropoda</taxon>
        <taxon>Neogastropoda</taxon>
        <taxon>Conoidea</taxon>
        <taxon>Conidae</taxon>
        <taxon>Californiconus</taxon>
    </lineage>
</organism>
<dbReference type="GO" id="GO:0005576">
    <property type="term" value="C:extracellular region"/>
    <property type="evidence" value="ECO:0007669"/>
    <property type="project" value="UniProtKB-SubCell"/>
</dbReference>
<dbReference type="GO" id="GO:0090729">
    <property type="term" value="F:toxin activity"/>
    <property type="evidence" value="ECO:0007669"/>
    <property type="project" value="UniProtKB-KW"/>
</dbReference>
<keyword id="KW-1015">Disulfide bond</keyword>
<keyword id="KW-0528">Neurotoxin</keyword>
<keyword id="KW-0964">Secreted</keyword>
<keyword id="KW-0732">Signal</keyword>
<keyword id="KW-0800">Toxin</keyword>